<proteinExistence type="inferred from homology"/>
<feature type="signal peptide" evidence="1">
    <location>
        <begin position="1"/>
        <end position="20"/>
    </location>
</feature>
<feature type="chain" id="PRO_1000131530" description="Tol-Pal system protein TolB" evidence="1">
    <location>
        <begin position="21"/>
        <end position="435"/>
    </location>
</feature>
<reference key="1">
    <citation type="journal article" date="2009" name="PLoS Pathog.">
        <title>Molecular evolutionary consequences of niche restriction in Francisella tularensis, a facultative intracellular pathogen.</title>
        <authorList>
            <person name="Larsson P."/>
            <person name="Elfsmark D."/>
            <person name="Svensson K."/>
            <person name="Wikstroem P."/>
            <person name="Forsman M."/>
            <person name="Brettin T."/>
            <person name="Keim P."/>
            <person name="Johansson A."/>
        </authorList>
    </citation>
    <scope>NUCLEOTIDE SEQUENCE [LARGE SCALE GENOMIC DNA]</scope>
    <source>
        <strain>FSC147</strain>
    </source>
</reference>
<protein>
    <recommendedName>
        <fullName evidence="1">Tol-Pal system protein TolB</fullName>
    </recommendedName>
</protein>
<evidence type="ECO:0000255" key="1">
    <source>
        <dbReference type="HAMAP-Rule" id="MF_00671"/>
    </source>
</evidence>
<dbReference type="EMBL" id="CP000915">
    <property type="protein sequence ID" value="ACD30461.1"/>
    <property type="molecule type" value="Genomic_DNA"/>
</dbReference>
<dbReference type="SMR" id="B2SET5"/>
<dbReference type="KEGG" id="ftm:FTM_0432"/>
<dbReference type="HOGENOM" id="CLU_047123_0_0_6"/>
<dbReference type="GO" id="GO:0042597">
    <property type="term" value="C:periplasmic space"/>
    <property type="evidence" value="ECO:0007669"/>
    <property type="project" value="UniProtKB-SubCell"/>
</dbReference>
<dbReference type="GO" id="GO:0051301">
    <property type="term" value="P:cell division"/>
    <property type="evidence" value="ECO:0007669"/>
    <property type="project" value="UniProtKB-UniRule"/>
</dbReference>
<dbReference type="GO" id="GO:0017038">
    <property type="term" value="P:protein import"/>
    <property type="evidence" value="ECO:0007669"/>
    <property type="project" value="InterPro"/>
</dbReference>
<dbReference type="Gene3D" id="2.120.10.30">
    <property type="entry name" value="TolB, C-terminal domain"/>
    <property type="match status" value="1"/>
</dbReference>
<dbReference type="Gene3D" id="3.40.50.10070">
    <property type="entry name" value="TolB, N-terminal domain"/>
    <property type="match status" value="1"/>
</dbReference>
<dbReference type="HAMAP" id="MF_00671">
    <property type="entry name" value="TolB"/>
    <property type="match status" value="1"/>
</dbReference>
<dbReference type="InterPro" id="IPR011042">
    <property type="entry name" value="6-blade_b-propeller_TolB-like"/>
</dbReference>
<dbReference type="InterPro" id="IPR011659">
    <property type="entry name" value="PD40"/>
</dbReference>
<dbReference type="InterPro" id="IPR014167">
    <property type="entry name" value="Tol-Pal_TolB"/>
</dbReference>
<dbReference type="PANTHER" id="PTHR36842:SF1">
    <property type="entry name" value="PROTEIN TOLB"/>
    <property type="match status" value="1"/>
</dbReference>
<dbReference type="PANTHER" id="PTHR36842">
    <property type="entry name" value="PROTEIN TOLB HOMOLOG"/>
    <property type="match status" value="1"/>
</dbReference>
<dbReference type="Pfam" id="PF07676">
    <property type="entry name" value="PD40"/>
    <property type="match status" value="3"/>
</dbReference>
<dbReference type="SUPFAM" id="SSF52964">
    <property type="entry name" value="TolB, N-terminal domain"/>
    <property type="match status" value="1"/>
</dbReference>
<dbReference type="SUPFAM" id="SSF69304">
    <property type="entry name" value="Tricorn protease N-terminal domain"/>
    <property type="match status" value="1"/>
</dbReference>
<name>TOLB_FRATM</name>
<organism>
    <name type="scientific">Francisella tularensis subsp. mediasiatica (strain FSC147)</name>
    <dbReference type="NCBI Taxonomy" id="441952"/>
    <lineage>
        <taxon>Bacteria</taxon>
        <taxon>Pseudomonadati</taxon>
        <taxon>Pseudomonadota</taxon>
        <taxon>Gammaproteobacteria</taxon>
        <taxon>Thiotrichales</taxon>
        <taxon>Francisellaceae</taxon>
        <taxon>Francisella</taxon>
    </lineage>
</organism>
<gene>
    <name evidence="1" type="primary">tolB</name>
    <name type="ordered locus">FTM_0432</name>
</gene>
<accession>B2SET5</accession>
<sequence>MRKIIAGVFIFVFLISNLYADLVAEVTTGVIQKPLVTVVSDNVVDQFPQQVNFVIVADLNHNAKLQANDTIKYEIKQKQNIPWKSLKSDYVVLTKYTNNSYNNYTVEVQILKRNDTSYLQAITYKNINVSLMRALAHKISNYVYQKLTGNQGFFLTKLAYVKVSNPYARYGRLYELIISDYDGYNKHVVLRQTDNPIATPSWSNDGRYIVYSSYSGGSMGVYTLEIATGKVTRITNYKGINSSPSFSPDGKEIALALSKGYSDQTNIYIMNLSTKALKRITINGINTAPKFSPNGQSIVFTSDREGRPNIYVASVNSKYPQSSILSTKIHQAYEPNYTPDGKNIVFMNQSSRTSGTQIADFNLANGSVTNITNGKADSSPTVSPYGDMVAYISTNTRGYSSLDMVSLDGDNHFNIETADNGNILIQSPSWSPKNF</sequence>
<keyword id="KW-0131">Cell cycle</keyword>
<keyword id="KW-0132">Cell division</keyword>
<keyword id="KW-0574">Periplasm</keyword>
<keyword id="KW-0732">Signal</keyword>
<comment type="function">
    <text evidence="1">Part of the Tol-Pal system, which plays a role in outer membrane invagination during cell division and is important for maintaining outer membrane integrity.</text>
</comment>
<comment type="subunit">
    <text evidence="1">The Tol-Pal system is composed of five core proteins: the inner membrane proteins TolA, TolQ and TolR, the periplasmic protein TolB and the outer membrane protein Pal. They form a network linking the inner and outer membranes and the peptidoglycan layer.</text>
</comment>
<comment type="subcellular location">
    <subcellularLocation>
        <location evidence="1">Periplasm</location>
    </subcellularLocation>
</comment>
<comment type="similarity">
    <text evidence="1">Belongs to the TolB family.</text>
</comment>